<sequence>MSQTSLKKERDPSILILDFGSQYSELIARRIRETNVFSLVVSNFISIEDINRINPKGIILSGGPNSVYEQNAPRCDEKIFNLGIPILGICYGMQLMVKELGGTVISATKKAEYGRAPLNIDQESDLLFDVEDKSIMWMSHGDSINCLPDGFNKIAHTENTLHAAISNDVKKLFGVQFHPEVVHSEFGMRVIKNFVYKISCCTADWTTETYIEETIPRIREQVGNKKVLLALSGGVDSSTLAFLLNKAIGNQLTCMFIDQGFMRKGEPEFLMNFFDKKFHIKVEYINARERFIAKLKGITDPEQKRKIIGEEFIRVFEEESNRLGPFQYLAQGTLYPDVIESAGTNIDPKTGERIAVKIKSHHNVGGLPKDLQFKLVEPLRKLFKDEVRKVGAALGLPDEIIKRHPFPGPGLAIRILGEVNNEKLDCLRDADWIVRDEIKKAGLYNDIWQAFAVLLPVKTVGVMGDKRTYSWPIVLRCVSSEDGMTADWSKIPFQILERIANRIVNEVISVNRVVYDITSKPPGTIEWE</sequence>
<keyword id="KW-0067">ATP-binding</keyword>
<keyword id="KW-0315">Glutamine amidotransferase</keyword>
<keyword id="KW-0332">GMP biosynthesis</keyword>
<keyword id="KW-0436">Ligase</keyword>
<keyword id="KW-0547">Nucleotide-binding</keyword>
<keyword id="KW-0658">Purine biosynthesis</keyword>
<evidence type="ECO:0000255" key="1">
    <source>
        <dbReference type="HAMAP-Rule" id="MF_00344"/>
    </source>
</evidence>
<name>GUAA_PROMS</name>
<proteinExistence type="inferred from homology"/>
<gene>
    <name evidence="1" type="primary">guaA</name>
    <name type="ordered locus">A9601_00361</name>
</gene>
<organism>
    <name type="scientific">Prochlorococcus marinus (strain AS9601)</name>
    <dbReference type="NCBI Taxonomy" id="146891"/>
    <lineage>
        <taxon>Bacteria</taxon>
        <taxon>Bacillati</taxon>
        <taxon>Cyanobacteriota</taxon>
        <taxon>Cyanophyceae</taxon>
        <taxon>Synechococcales</taxon>
        <taxon>Prochlorococcaceae</taxon>
        <taxon>Prochlorococcus</taxon>
    </lineage>
</organism>
<reference key="1">
    <citation type="journal article" date="2007" name="PLoS Genet.">
        <title>Patterns and implications of gene gain and loss in the evolution of Prochlorococcus.</title>
        <authorList>
            <person name="Kettler G.C."/>
            <person name="Martiny A.C."/>
            <person name="Huang K."/>
            <person name="Zucker J."/>
            <person name="Coleman M.L."/>
            <person name="Rodrigue S."/>
            <person name="Chen F."/>
            <person name="Lapidus A."/>
            <person name="Ferriera S."/>
            <person name="Johnson J."/>
            <person name="Steglich C."/>
            <person name="Church G.M."/>
            <person name="Richardson P."/>
            <person name="Chisholm S.W."/>
        </authorList>
    </citation>
    <scope>NUCLEOTIDE SEQUENCE [LARGE SCALE GENOMIC DNA]</scope>
    <source>
        <strain>AS9601</strain>
    </source>
</reference>
<comment type="function">
    <text evidence="1">Catalyzes the synthesis of GMP from XMP.</text>
</comment>
<comment type="catalytic activity">
    <reaction evidence="1">
        <text>XMP + L-glutamine + ATP + H2O = GMP + L-glutamate + AMP + diphosphate + 2 H(+)</text>
        <dbReference type="Rhea" id="RHEA:11680"/>
        <dbReference type="ChEBI" id="CHEBI:15377"/>
        <dbReference type="ChEBI" id="CHEBI:15378"/>
        <dbReference type="ChEBI" id="CHEBI:29985"/>
        <dbReference type="ChEBI" id="CHEBI:30616"/>
        <dbReference type="ChEBI" id="CHEBI:33019"/>
        <dbReference type="ChEBI" id="CHEBI:57464"/>
        <dbReference type="ChEBI" id="CHEBI:58115"/>
        <dbReference type="ChEBI" id="CHEBI:58359"/>
        <dbReference type="ChEBI" id="CHEBI:456215"/>
        <dbReference type="EC" id="6.3.5.2"/>
    </reaction>
</comment>
<comment type="pathway">
    <text evidence="1">Purine metabolism; GMP biosynthesis; GMP from XMP (L-Gln route): step 1/1.</text>
</comment>
<comment type="subunit">
    <text evidence="1">Homodimer.</text>
</comment>
<feature type="chain" id="PRO_1000120363" description="GMP synthase [glutamine-hydrolyzing]">
    <location>
        <begin position="1"/>
        <end position="528"/>
    </location>
</feature>
<feature type="domain" description="Glutamine amidotransferase type-1" evidence="1">
    <location>
        <begin position="13"/>
        <end position="204"/>
    </location>
</feature>
<feature type="domain" description="GMPS ATP-PPase" evidence="1">
    <location>
        <begin position="205"/>
        <end position="403"/>
    </location>
</feature>
<feature type="active site" description="Nucleophile" evidence="1">
    <location>
        <position position="90"/>
    </location>
</feature>
<feature type="active site" evidence="1">
    <location>
        <position position="178"/>
    </location>
</feature>
<feature type="active site" evidence="1">
    <location>
        <position position="180"/>
    </location>
</feature>
<feature type="binding site" evidence="1">
    <location>
        <begin position="232"/>
        <end position="238"/>
    </location>
    <ligand>
        <name>ATP</name>
        <dbReference type="ChEBI" id="CHEBI:30616"/>
    </ligand>
</feature>
<protein>
    <recommendedName>
        <fullName evidence="1">GMP synthase [glutamine-hydrolyzing]</fullName>
        <ecNumber evidence="1">6.3.5.2</ecNumber>
    </recommendedName>
    <alternativeName>
        <fullName evidence="1">GMP synthetase</fullName>
    </alternativeName>
    <alternativeName>
        <fullName evidence="1">Glutamine amidotransferase</fullName>
    </alternativeName>
</protein>
<dbReference type="EC" id="6.3.5.2" evidence="1"/>
<dbReference type="EMBL" id="CP000551">
    <property type="protein sequence ID" value="ABM69324.1"/>
    <property type="molecule type" value="Genomic_DNA"/>
</dbReference>
<dbReference type="RefSeq" id="WP_011817514.1">
    <property type="nucleotide sequence ID" value="NC_008816.1"/>
</dbReference>
<dbReference type="SMR" id="A2BNG3"/>
<dbReference type="STRING" id="146891.A9601_00361"/>
<dbReference type="KEGG" id="pmb:A9601_00361"/>
<dbReference type="eggNOG" id="COG0519">
    <property type="taxonomic scope" value="Bacteria"/>
</dbReference>
<dbReference type="HOGENOM" id="CLU_014340_0_5_3"/>
<dbReference type="OrthoDB" id="9802219at2"/>
<dbReference type="UniPathway" id="UPA00189">
    <property type="reaction ID" value="UER00296"/>
</dbReference>
<dbReference type="Proteomes" id="UP000002590">
    <property type="component" value="Chromosome"/>
</dbReference>
<dbReference type="GO" id="GO:0005829">
    <property type="term" value="C:cytosol"/>
    <property type="evidence" value="ECO:0007669"/>
    <property type="project" value="TreeGrafter"/>
</dbReference>
<dbReference type="GO" id="GO:0005524">
    <property type="term" value="F:ATP binding"/>
    <property type="evidence" value="ECO:0007669"/>
    <property type="project" value="UniProtKB-UniRule"/>
</dbReference>
<dbReference type="GO" id="GO:0003921">
    <property type="term" value="F:GMP synthase activity"/>
    <property type="evidence" value="ECO:0007669"/>
    <property type="project" value="InterPro"/>
</dbReference>
<dbReference type="CDD" id="cd01742">
    <property type="entry name" value="GATase1_GMP_Synthase"/>
    <property type="match status" value="1"/>
</dbReference>
<dbReference type="CDD" id="cd01997">
    <property type="entry name" value="GMP_synthase_C"/>
    <property type="match status" value="1"/>
</dbReference>
<dbReference type="FunFam" id="3.30.300.10:FF:000002">
    <property type="entry name" value="GMP synthase [glutamine-hydrolyzing]"/>
    <property type="match status" value="1"/>
</dbReference>
<dbReference type="FunFam" id="3.40.50.620:FF:000001">
    <property type="entry name" value="GMP synthase [glutamine-hydrolyzing]"/>
    <property type="match status" value="1"/>
</dbReference>
<dbReference type="FunFam" id="3.40.50.880:FF:000001">
    <property type="entry name" value="GMP synthase [glutamine-hydrolyzing]"/>
    <property type="match status" value="1"/>
</dbReference>
<dbReference type="Gene3D" id="3.30.300.10">
    <property type="match status" value="1"/>
</dbReference>
<dbReference type="Gene3D" id="3.40.50.880">
    <property type="match status" value="1"/>
</dbReference>
<dbReference type="Gene3D" id="3.40.50.620">
    <property type="entry name" value="HUPs"/>
    <property type="match status" value="1"/>
</dbReference>
<dbReference type="HAMAP" id="MF_00344">
    <property type="entry name" value="GMP_synthase"/>
    <property type="match status" value="1"/>
</dbReference>
<dbReference type="InterPro" id="IPR029062">
    <property type="entry name" value="Class_I_gatase-like"/>
</dbReference>
<dbReference type="InterPro" id="IPR017926">
    <property type="entry name" value="GATASE"/>
</dbReference>
<dbReference type="InterPro" id="IPR001674">
    <property type="entry name" value="GMP_synth_C"/>
</dbReference>
<dbReference type="InterPro" id="IPR004739">
    <property type="entry name" value="GMP_synth_GATase"/>
</dbReference>
<dbReference type="InterPro" id="IPR022955">
    <property type="entry name" value="GMP_synthase"/>
</dbReference>
<dbReference type="InterPro" id="IPR025777">
    <property type="entry name" value="GMPS_ATP_PPase_dom"/>
</dbReference>
<dbReference type="InterPro" id="IPR022310">
    <property type="entry name" value="NAD/GMP_synthase"/>
</dbReference>
<dbReference type="InterPro" id="IPR014729">
    <property type="entry name" value="Rossmann-like_a/b/a_fold"/>
</dbReference>
<dbReference type="NCBIfam" id="TIGR00884">
    <property type="entry name" value="guaA_Cterm"/>
    <property type="match status" value="1"/>
</dbReference>
<dbReference type="NCBIfam" id="TIGR00888">
    <property type="entry name" value="guaA_Nterm"/>
    <property type="match status" value="1"/>
</dbReference>
<dbReference type="NCBIfam" id="NF000848">
    <property type="entry name" value="PRK00074.1"/>
    <property type="match status" value="1"/>
</dbReference>
<dbReference type="PANTHER" id="PTHR11922:SF2">
    <property type="entry name" value="GMP SYNTHASE [GLUTAMINE-HYDROLYZING]"/>
    <property type="match status" value="1"/>
</dbReference>
<dbReference type="PANTHER" id="PTHR11922">
    <property type="entry name" value="GMP SYNTHASE-RELATED"/>
    <property type="match status" value="1"/>
</dbReference>
<dbReference type="Pfam" id="PF00117">
    <property type="entry name" value="GATase"/>
    <property type="match status" value="1"/>
</dbReference>
<dbReference type="Pfam" id="PF00958">
    <property type="entry name" value="GMP_synt_C"/>
    <property type="match status" value="1"/>
</dbReference>
<dbReference type="Pfam" id="PF02540">
    <property type="entry name" value="NAD_synthase"/>
    <property type="match status" value="1"/>
</dbReference>
<dbReference type="PRINTS" id="PR00097">
    <property type="entry name" value="ANTSNTHASEII"/>
</dbReference>
<dbReference type="PRINTS" id="PR00099">
    <property type="entry name" value="CPSGATASE"/>
</dbReference>
<dbReference type="PRINTS" id="PR00096">
    <property type="entry name" value="GATASE"/>
</dbReference>
<dbReference type="SUPFAM" id="SSF52402">
    <property type="entry name" value="Adenine nucleotide alpha hydrolases-like"/>
    <property type="match status" value="1"/>
</dbReference>
<dbReference type="SUPFAM" id="SSF52317">
    <property type="entry name" value="Class I glutamine amidotransferase-like"/>
    <property type="match status" value="1"/>
</dbReference>
<dbReference type="SUPFAM" id="SSF54810">
    <property type="entry name" value="GMP synthetase C-terminal dimerisation domain"/>
    <property type="match status" value="1"/>
</dbReference>
<dbReference type="PROSITE" id="PS51273">
    <property type="entry name" value="GATASE_TYPE_1"/>
    <property type="match status" value="1"/>
</dbReference>
<dbReference type="PROSITE" id="PS51553">
    <property type="entry name" value="GMPS_ATP_PPASE"/>
    <property type="match status" value="1"/>
</dbReference>
<accession>A2BNG3</accession>